<protein>
    <recommendedName>
        <fullName evidence="1">Large ribosomal subunit protein bL36</fullName>
    </recommendedName>
    <alternativeName>
        <fullName evidence="2">50S ribosomal protein L36</fullName>
    </alternativeName>
</protein>
<comment type="similarity">
    <text evidence="1">Belongs to the bacterial ribosomal protein bL36 family.</text>
</comment>
<accession>A9KD10</accession>
<name>RL36_COXBN</name>
<feature type="chain" id="PRO_1000078470" description="Large ribosomal subunit protein bL36">
    <location>
        <begin position="1"/>
        <end position="40"/>
    </location>
</feature>
<dbReference type="EMBL" id="CP000733">
    <property type="status" value="NOT_ANNOTATED_CDS"/>
    <property type="molecule type" value="Genomic_DNA"/>
</dbReference>
<dbReference type="RefSeq" id="WP_005771506.1">
    <property type="nucleotide sequence ID" value="NC_009727.1"/>
</dbReference>
<dbReference type="SMR" id="A9KD10"/>
<dbReference type="Proteomes" id="UP000008555">
    <property type="component" value="Chromosome"/>
</dbReference>
<dbReference type="GO" id="GO:0005737">
    <property type="term" value="C:cytoplasm"/>
    <property type="evidence" value="ECO:0007669"/>
    <property type="project" value="UniProtKB-ARBA"/>
</dbReference>
<dbReference type="GO" id="GO:1990904">
    <property type="term" value="C:ribonucleoprotein complex"/>
    <property type="evidence" value="ECO:0007669"/>
    <property type="project" value="UniProtKB-KW"/>
</dbReference>
<dbReference type="GO" id="GO:0005840">
    <property type="term" value="C:ribosome"/>
    <property type="evidence" value="ECO:0007669"/>
    <property type="project" value="UniProtKB-KW"/>
</dbReference>
<dbReference type="GO" id="GO:0003735">
    <property type="term" value="F:structural constituent of ribosome"/>
    <property type="evidence" value="ECO:0007669"/>
    <property type="project" value="InterPro"/>
</dbReference>
<dbReference type="GO" id="GO:0006412">
    <property type="term" value="P:translation"/>
    <property type="evidence" value="ECO:0007669"/>
    <property type="project" value="UniProtKB-UniRule"/>
</dbReference>
<dbReference type="HAMAP" id="MF_00251">
    <property type="entry name" value="Ribosomal_bL36"/>
    <property type="match status" value="1"/>
</dbReference>
<dbReference type="InterPro" id="IPR000473">
    <property type="entry name" value="Ribosomal_bL36"/>
</dbReference>
<dbReference type="InterPro" id="IPR035977">
    <property type="entry name" value="Ribosomal_bL36_sp"/>
</dbReference>
<dbReference type="NCBIfam" id="TIGR01022">
    <property type="entry name" value="rpmJ_bact"/>
    <property type="match status" value="1"/>
</dbReference>
<dbReference type="PANTHER" id="PTHR42888">
    <property type="entry name" value="50S RIBOSOMAL PROTEIN L36, CHLOROPLASTIC"/>
    <property type="match status" value="1"/>
</dbReference>
<dbReference type="PANTHER" id="PTHR42888:SF1">
    <property type="entry name" value="LARGE RIBOSOMAL SUBUNIT PROTEIN BL36C"/>
    <property type="match status" value="1"/>
</dbReference>
<dbReference type="Pfam" id="PF00444">
    <property type="entry name" value="Ribosomal_L36"/>
    <property type="match status" value="1"/>
</dbReference>
<dbReference type="SUPFAM" id="SSF57840">
    <property type="entry name" value="Ribosomal protein L36"/>
    <property type="match status" value="1"/>
</dbReference>
<dbReference type="PROSITE" id="PS00828">
    <property type="entry name" value="RIBOSOMAL_L36"/>
    <property type="match status" value="1"/>
</dbReference>
<reference key="1">
    <citation type="journal article" date="2009" name="Infect. Immun.">
        <title>Comparative genomics reveal extensive transposon-mediated genomic plasticity and diversity among potential effector proteins within the genus Coxiella.</title>
        <authorList>
            <person name="Beare P.A."/>
            <person name="Unsworth N."/>
            <person name="Andoh M."/>
            <person name="Voth D.E."/>
            <person name="Omsland A."/>
            <person name="Gilk S.D."/>
            <person name="Williams K.P."/>
            <person name="Sobral B.W."/>
            <person name="Kupko J.J. III"/>
            <person name="Porcella S.F."/>
            <person name="Samuel J.E."/>
            <person name="Heinzen R.A."/>
        </authorList>
    </citation>
    <scope>NUCLEOTIDE SEQUENCE [LARGE SCALE GENOMIC DNA]</scope>
    <source>
        <strain>Dugway 5J108-111</strain>
    </source>
</reference>
<organism>
    <name type="scientific">Coxiella burnetii (strain Dugway 5J108-111)</name>
    <dbReference type="NCBI Taxonomy" id="434922"/>
    <lineage>
        <taxon>Bacteria</taxon>
        <taxon>Pseudomonadati</taxon>
        <taxon>Pseudomonadota</taxon>
        <taxon>Gammaproteobacteria</taxon>
        <taxon>Legionellales</taxon>
        <taxon>Coxiellaceae</taxon>
        <taxon>Coxiella</taxon>
    </lineage>
</organism>
<proteinExistence type="inferred from homology"/>
<keyword id="KW-0687">Ribonucleoprotein</keyword>
<keyword id="KW-0689">Ribosomal protein</keyword>
<sequence>MKVRASVKRMCRNCKVIRRNGVVRVICSDARHKQRQKGGK</sequence>
<evidence type="ECO:0000255" key="1">
    <source>
        <dbReference type="HAMAP-Rule" id="MF_00251"/>
    </source>
</evidence>
<evidence type="ECO:0000305" key="2"/>
<gene>
    <name evidence="1" type="primary">rpmJ</name>
    <name type="ordered locus">CBUD_1833</name>
</gene>